<dbReference type="EC" id="2.7.1.167" evidence="1"/>
<dbReference type="EC" id="2.7.7.70" evidence="1"/>
<dbReference type="EMBL" id="CP000950">
    <property type="protein sequence ID" value="ACA66948.1"/>
    <property type="molecule type" value="Genomic_DNA"/>
</dbReference>
<dbReference type="RefSeq" id="WP_011193099.1">
    <property type="nucleotide sequence ID" value="NZ_CP009792.1"/>
</dbReference>
<dbReference type="SMR" id="B1JM26"/>
<dbReference type="GeneID" id="49784608"/>
<dbReference type="KEGG" id="ypy:YPK_0645"/>
<dbReference type="PATRIC" id="fig|502800.11.peg.1262"/>
<dbReference type="UniPathway" id="UPA00356">
    <property type="reaction ID" value="UER00437"/>
</dbReference>
<dbReference type="UniPathway" id="UPA00356">
    <property type="reaction ID" value="UER00439"/>
</dbReference>
<dbReference type="GO" id="GO:0005829">
    <property type="term" value="C:cytosol"/>
    <property type="evidence" value="ECO:0007669"/>
    <property type="project" value="TreeGrafter"/>
</dbReference>
<dbReference type="GO" id="GO:0005524">
    <property type="term" value="F:ATP binding"/>
    <property type="evidence" value="ECO:0007669"/>
    <property type="project" value="UniProtKB-UniRule"/>
</dbReference>
<dbReference type="GO" id="GO:0033785">
    <property type="term" value="F:heptose 7-phosphate kinase activity"/>
    <property type="evidence" value="ECO:0007669"/>
    <property type="project" value="UniProtKB-UniRule"/>
</dbReference>
<dbReference type="GO" id="GO:0033786">
    <property type="term" value="F:heptose-1-phosphate adenylyltransferase activity"/>
    <property type="evidence" value="ECO:0007669"/>
    <property type="project" value="UniProtKB-UniRule"/>
</dbReference>
<dbReference type="GO" id="GO:0016773">
    <property type="term" value="F:phosphotransferase activity, alcohol group as acceptor"/>
    <property type="evidence" value="ECO:0007669"/>
    <property type="project" value="InterPro"/>
</dbReference>
<dbReference type="GO" id="GO:0097171">
    <property type="term" value="P:ADP-L-glycero-beta-D-manno-heptose biosynthetic process"/>
    <property type="evidence" value="ECO:0007669"/>
    <property type="project" value="UniProtKB-UniPathway"/>
</dbReference>
<dbReference type="CDD" id="cd01172">
    <property type="entry name" value="RfaE_like"/>
    <property type="match status" value="1"/>
</dbReference>
<dbReference type="FunFam" id="3.40.1190.20:FF:000002">
    <property type="entry name" value="Bifunctional protein HldE"/>
    <property type="match status" value="1"/>
</dbReference>
<dbReference type="FunFam" id="3.40.50.620:FF:000028">
    <property type="entry name" value="Bifunctional protein HldE"/>
    <property type="match status" value="1"/>
</dbReference>
<dbReference type="Gene3D" id="3.40.1190.20">
    <property type="match status" value="1"/>
</dbReference>
<dbReference type="Gene3D" id="3.40.50.620">
    <property type="entry name" value="HUPs"/>
    <property type="match status" value="1"/>
</dbReference>
<dbReference type="HAMAP" id="MF_01603">
    <property type="entry name" value="HldE"/>
    <property type="match status" value="1"/>
</dbReference>
<dbReference type="InterPro" id="IPR023030">
    <property type="entry name" value="Bifunc_HldE"/>
</dbReference>
<dbReference type="InterPro" id="IPR002173">
    <property type="entry name" value="Carboh/pur_kinase_PfkB_CS"/>
</dbReference>
<dbReference type="InterPro" id="IPR004821">
    <property type="entry name" value="Cyt_trans-like"/>
</dbReference>
<dbReference type="InterPro" id="IPR011611">
    <property type="entry name" value="PfkB_dom"/>
</dbReference>
<dbReference type="InterPro" id="IPR011913">
    <property type="entry name" value="RfaE_dom_I"/>
</dbReference>
<dbReference type="InterPro" id="IPR011914">
    <property type="entry name" value="RfaE_dom_II"/>
</dbReference>
<dbReference type="InterPro" id="IPR029056">
    <property type="entry name" value="Ribokinase-like"/>
</dbReference>
<dbReference type="InterPro" id="IPR014729">
    <property type="entry name" value="Rossmann-like_a/b/a_fold"/>
</dbReference>
<dbReference type="NCBIfam" id="TIGR00125">
    <property type="entry name" value="cyt_tran_rel"/>
    <property type="match status" value="1"/>
</dbReference>
<dbReference type="NCBIfam" id="NF008454">
    <property type="entry name" value="PRK11316.1"/>
    <property type="match status" value="1"/>
</dbReference>
<dbReference type="NCBIfam" id="TIGR02198">
    <property type="entry name" value="rfaE_dom_I"/>
    <property type="match status" value="1"/>
</dbReference>
<dbReference type="NCBIfam" id="TIGR02199">
    <property type="entry name" value="rfaE_dom_II"/>
    <property type="match status" value="1"/>
</dbReference>
<dbReference type="PANTHER" id="PTHR46969">
    <property type="entry name" value="BIFUNCTIONAL PROTEIN HLDE"/>
    <property type="match status" value="1"/>
</dbReference>
<dbReference type="PANTHER" id="PTHR46969:SF1">
    <property type="entry name" value="BIFUNCTIONAL PROTEIN HLDE"/>
    <property type="match status" value="1"/>
</dbReference>
<dbReference type="Pfam" id="PF01467">
    <property type="entry name" value="CTP_transf_like"/>
    <property type="match status" value="1"/>
</dbReference>
<dbReference type="Pfam" id="PF00294">
    <property type="entry name" value="PfkB"/>
    <property type="match status" value="1"/>
</dbReference>
<dbReference type="SUPFAM" id="SSF52374">
    <property type="entry name" value="Nucleotidylyl transferase"/>
    <property type="match status" value="1"/>
</dbReference>
<dbReference type="SUPFAM" id="SSF53613">
    <property type="entry name" value="Ribokinase-like"/>
    <property type="match status" value="1"/>
</dbReference>
<dbReference type="PROSITE" id="PS00583">
    <property type="entry name" value="PFKB_KINASES_1"/>
    <property type="match status" value="1"/>
</dbReference>
<comment type="function">
    <text evidence="1">Catalyzes the phosphorylation of D-glycero-D-manno-heptose 7-phosphate at the C-1 position to selectively form D-glycero-beta-D-manno-heptose-1,7-bisphosphate.</text>
</comment>
<comment type="function">
    <text evidence="1">Catalyzes the ADP transfer from ATP to D-glycero-beta-D-manno-heptose 1-phosphate, yielding ADP-D-glycero-beta-D-manno-heptose.</text>
</comment>
<comment type="catalytic activity">
    <reaction evidence="1">
        <text>D-glycero-beta-D-manno-heptose 7-phosphate + ATP = D-glycero-beta-D-manno-heptose 1,7-bisphosphate + ADP + H(+)</text>
        <dbReference type="Rhea" id="RHEA:27473"/>
        <dbReference type="ChEBI" id="CHEBI:15378"/>
        <dbReference type="ChEBI" id="CHEBI:30616"/>
        <dbReference type="ChEBI" id="CHEBI:60204"/>
        <dbReference type="ChEBI" id="CHEBI:60208"/>
        <dbReference type="ChEBI" id="CHEBI:456216"/>
        <dbReference type="EC" id="2.7.1.167"/>
    </reaction>
</comment>
<comment type="catalytic activity">
    <reaction evidence="1">
        <text>D-glycero-beta-D-manno-heptose 1-phosphate + ATP + H(+) = ADP-D-glycero-beta-D-manno-heptose + diphosphate</text>
        <dbReference type="Rhea" id="RHEA:27465"/>
        <dbReference type="ChEBI" id="CHEBI:15378"/>
        <dbReference type="ChEBI" id="CHEBI:30616"/>
        <dbReference type="ChEBI" id="CHEBI:33019"/>
        <dbReference type="ChEBI" id="CHEBI:59967"/>
        <dbReference type="ChEBI" id="CHEBI:61593"/>
        <dbReference type="EC" id="2.7.7.70"/>
    </reaction>
</comment>
<comment type="pathway">
    <text evidence="1">Nucleotide-sugar biosynthesis; ADP-L-glycero-beta-D-manno-heptose biosynthesis; ADP-L-glycero-beta-D-manno-heptose from D-glycero-beta-D-manno-heptose 7-phosphate: step 1/4.</text>
</comment>
<comment type="pathway">
    <text evidence="1">Nucleotide-sugar biosynthesis; ADP-L-glycero-beta-D-manno-heptose biosynthesis; ADP-L-glycero-beta-D-manno-heptose from D-glycero-beta-D-manno-heptose 7-phosphate: step 3/4.</text>
</comment>
<comment type="subunit">
    <text evidence="1">Homodimer.</text>
</comment>
<comment type="similarity">
    <text evidence="1">In the N-terminal section; belongs to the carbohydrate kinase PfkB family.</text>
</comment>
<comment type="similarity">
    <text evidence="1">In the C-terminal section; belongs to the cytidylyltransferase family.</text>
</comment>
<sequence>MKVTLPDFRRAGVLVVGDVMLDRYWYGPTSRISPEAPVPVVKVDTIEERPGGAANVAMNIASLGAVARLVGLTGIDDAARALICKLSEVRVRCDFVSVPTHPTITKLRVLSRNQQLIRLDFEEGFDGVDPTPIFERIQLALPQIGALVLSDYAKGALNSVQPMIQLARKANVPVLIDPKGSDFERYRGATLLTPNLSEFEAVVGRCKNEEELVNRGMQLVADFELSALLVTRSEQGMTLLQLGKPPLHLPTQAKEVFDVTGAGDTVIGVLAAALAAGNSLEESCFLANAAAGVVVGKLGTSTVSPIELENAIRGRAETGFGVMDEQQLKIAVAQARQRGEKVVMTNGIFDILHAGHVSYLANARKLGDRLIVAVNSDASTKRLKGEKRPVNPLEQRMVVLGALEAVDWVVPFEEDTPQRLIADILPDLLVKGGDYKPHEIAGSEEVWAAGGEVKVLNFEDGVSTTNIIQSIKNGRG</sequence>
<feature type="chain" id="PRO_1000185830" description="Bifunctional protein HldE">
    <location>
        <begin position="1"/>
        <end position="476"/>
    </location>
</feature>
<feature type="region of interest" description="Ribokinase">
    <location>
        <begin position="1"/>
        <end position="318"/>
    </location>
</feature>
<feature type="region of interest" description="Cytidylyltransferase">
    <location>
        <begin position="344"/>
        <end position="476"/>
    </location>
</feature>
<feature type="active site" evidence="1">
    <location>
        <position position="264"/>
    </location>
</feature>
<feature type="binding site" evidence="1">
    <location>
        <begin position="195"/>
        <end position="198"/>
    </location>
    <ligand>
        <name>ATP</name>
        <dbReference type="ChEBI" id="CHEBI:30616"/>
    </ligand>
</feature>
<proteinExistence type="inferred from homology"/>
<organism>
    <name type="scientific">Yersinia pseudotuberculosis serotype O:3 (strain YPIII)</name>
    <dbReference type="NCBI Taxonomy" id="502800"/>
    <lineage>
        <taxon>Bacteria</taxon>
        <taxon>Pseudomonadati</taxon>
        <taxon>Pseudomonadota</taxon>
        <taxon>Gammaproteobacteria</taxon>
        <taxon>Enterobacterales</taxon>
        <taxon>Yersiniaceae</taxon>
        <taxon>Yersinia</taxon>
    </lineage>
</organism>
<protein>
    <recommendedName>
        <fullName evidence="1">Bifunctional protein HldE</fullName>
    </recommendedName>
    <domain>
        <recommendedName>
            <fullName evidence="1">D-beta-D-heptose 7-phosphate kinase</fullName>
            <ecNumber evidence="1">2.7.1.167</ecNumber>
        </recommendedName>
        <alternativeName>
            <fullName evidence="1">D-beta-D-heptose 7-phosphotransferase</fullName>
        </alternativeName>
        <alternativeName>
            <fullName evidence="1">D-glycero-beta-D-manno-heptose-7-phosphate kinase</fullName>
        </alternativeName>
    </domain>
    <domain>
        <recommendedName>
            <fullName evidence="1">D-beta-D-heptose 1-phosphate adenylyltransferase</fullName>
            <ecNumber evidence="1">2.7.7.70</ecNumber>
        </recommendedName>
        <alternativeName>
            <fullName evidence="1">D-glycero-beta-D-manno-heptose 1-phosphate adenylyltransferase</fullName>
        </alternativeName>
    </domain>
</protein>
<evidence type="ECO:0000255" key="1">
    <source>
        <dbReference type="HAMAP-Rule" id="MF_01603"/>
    </source>
</evidence>
<accession>B1JM26</accession>
<name>HLDE_YERPY</name>
<reference key="1">
    <citation type="submission" date="2008-02" db="EMBL/GenBank/DDBJ databases">
        <title>Complete sequence of Yersinia pseudotuberculosis YPIII.</title>
        <authorList>
            <consortium name="US DOE Joint Genome Institute"/>
            <person name="Copeland A."/>
            <person name="Lucas S."/>
            <person name="Lapidus A."/>
            <person name="Glavina del Rio T."/>
            <person name="Dalin E."/>
            <person name="Tice H."/>
            <person name="Bruce D."/>
            <person name="Goodwin L."/>
            <person name="Pitluck S."/>
            <person name="Munk A.C."/>
            <person name="Brettin T."/>
            <person name="Detter J.C."/>
            <person name="Han C."/>
            <person name="Tapia R."/>
            <person name="Schmutz J."/>
            <person name="Larimer F."/>
            <person name="Land M."/>
            <person name="Hauser L."/>
            <person name="Challacombe J.F."/>
            <person name="Green L."/>
            <person name="Lindler L.E."/>
            <person name="Nikolich M.P."/>
            <person name="Richardson P."/>
        </authorList>
    </citation>
    <scope>NUCLEOTIDE SEQUENCE [LARGE SCALE GENOMIC DNA]</scope>
    <source>
        <strain>YPIII</strain>
    </source>
</reference>
<keyword id="KW-0067">ATP-binding</keyword>
<keyword id="KW-0119">Carbohydrate metabolism</keyword>
<keyword id="KW-0418">Kinase</keyword>
<keyword id="KW-0511">Multifunctional enzyme</keyword>
<keyword id="KW-0547">Nucleotide-binding</keyword>
<keyword id="KW-0548">Nucleotidyltransferase</keyword>
<keyword id="KW-0808">Transferase</keyword>
<gene>
    <name evidence="1" type="primary">hldE</name>
    <name type="ordered locus">YPK_0645</name>
</gene>